<accession>Q8ZJB4</accession>
<accession>Q0WKA5</accession>
<feature type="chain" id="PRO_0000124388" description="Small ribosomal subunit protein uS7">
    <location>
        <begin position="1"/>
        <end position="156"/>
    </location>
</feature>
<proteinExistence type="inferred from homology"/>
<comment type="function">
    <text evidence="1">One of the primary rRNA binding proteins, it binds directly to 16S rRNA where it nucleates assembly of the head domain of the 30S subunit. Is located at the subunit interface close to the decoding center, probably blocks exit of the E-site tRNA.</text>
</comment>
<comment type="subunit">
    <text evidence="1">Part of the 30S ribosomal subunit. Contacts proteins S9 and S11.</text>
</comment>
<comment type="similarity">
    <text evidence="1">Belongs to the universal ribosomal protein uS7 family.</text>
</comment>
<sequence>MPRRRVIGQRKILPDPKFGSELLAKFVNILMVDGKKSTAEAIVYTALETLAQRSGKDFLEAFEVALDNVRPTVEVKSRRVGGSTYQVPVEVRPVRRNALAMRWIVDAARKRGDKSMALRLANELSDAAENKGSAVKKREDVHRMAEANKAFAHYRW</sequence>
<organism>
    <name type="scientific">Yersinia pestis</name>
    <dbReference type="NCBI Taxonomy" id="632"/>
    <lineage>
        <taxon>Bacteria</taxon>
        <taxon>Pseudomonadati</taxon>
        <taxon>Pseudomonadota</taxon>
        <taxon>Gammaproteobacteria</taxon>
        <taxon>Enterobacterales</taxon>
        <taxon>Yersiniaceae</taxon>
        <taxon>Yersinia</taxon>
    </lineage>
</organism>
<name>RS7_YERPE</name>
<protein>
    <recommendedName>
        <fullName evidence="1">Small ribosomal subunit protein uS7</fullName>
    </recommendedName>
    <alternativeName>
        <fullName evidence="2">30S ribosomal protein S7</fullName>
    </alternativeName>
</protein>
<reference key="1">
    <citation type="journal article" date="2001" name="Nature">
        <title>Genome sequence of Yersinia pestis, the causative agent of plague.</title>
        <authorList>
            <person name="Parkhill J."/>
            <person name="Wren B.W."/>
            <person name="Thomson N.R."/>
            <person name="Titball R.W."/>
            <person name="Holden M.T.G."/>
            <person name="Prentice M.B."/>
            <person name="Sebaihia M."/>
            <person name="James K.D."/>
            <person name="Churcher C.M."/>
            <person name="Mungall K.L."/>
            <person name="Baker S."/>
            <person name="Basham D."/>
            <person name="Bentley S.D."/>
            <person name="Brooks K."/>
            <person name="Cerdeno-Tarraga A.-M."/>
            <person name="Chillingworth T."/>
            <person name="Cronin A."/>
            <person name="Davies R.M."/>
            <person name="Davis P."/>
            <person name="Dougan G."/>
            <person name="Feltwell T."/>
            <person name="Hamlin N."/>
            <person name="Holroyd S."/>
            <person name="Jagels K."/>
            <person name="Karlyshev A.V."/>
            <person name="Leather S."/>
            <person name="Moule S."/>
            <person name="Oyston P.C.F."/>
            <person name="Quail M.A."/>
            <person name="Rutherford K.M."/>
            <person name="Simmonds M."/>
            <person name="Skelton J."/>
            <person name="Stevens K."/>
            <person name="Whitehead S."/>
            <person name="Barrell B.G."/>
        </authorList>
    </citation>
    <scope>NUCLEOTIDE SEQUENCE [LARGE SCALE GENOMIC DNA]</scope>
    <source>
        <strain>CO-92 / Biovar Orientalis</strain>
    </source>
</reference>
<reference key="2">
    <citation type="journal article" date="2002" name="J. Bacteriol.">
        <title>Genome sequence of Yersinia pestis KIM.</title>
        <authorList>
            <person name="Deng W."/>
            <person name="Burland V."/>
            <person name="Plunkett G. III"/>
            <person name="Boutin A."/>
            <person name="Mayhew G.F."/>
            <person name="Liss P."/>
            <person name="Perna N.T."/>
            <person name="Rose D.J."/>
            <person name="Mau B."/>
            <person name="Zhou S."/>
            <person name="Schwartz D.C."/>
            <person name="Fetherston J.D."/>
            <person name="Lindler L.E."/>
            <person name="Brubaker R.R."/>
            <person name="Plano G.V."/>
            <person name="Straley S.C."/>
            <person name="McDonough K.A."/>
            <person name="Nilles M.L."/>
            <person name="Matson J.S."/>
            <person name="Blattner F.R."/>
            <person name="Perry R.D."/>
        </authorList>
    </citation>
    <scope>NUCLEOTIDE SEQUENCE [LARGE SCALE GENOMIC DNA]</scope>
    <source>
        <strain>KIM10+ / Biovar Mediaevalis</strain>
    </source>
</reference>
<reference key="3">
    <citation type="journal article" date="2004" name="DNA Res.">
        <title>Complete genome sequence of Yersinia pestis strain 91001, an isolate avirulent to humans.</title>
        <authorList>
            <person name="Song Y."/>
            <person name="Tong Z."/>
            <person name="Wang J."/>
            <person name="Wang L."/>
            <person name="Guo Z."/>
            <person name="Han Y."/>
            <person name="Zhang J."/>
            <person name="Pei D."/>
            <person name="Zhou D."/>
            <person name="Qin H."/>
            <person name="Pang X."/>
            <person name="Han Y."/>
            <person name="Zhai J."/>
            <person name="Li M."/>
            <person name="Cui B."/>
            <person name="Qi Z."/>
            <person name="Jin L."/>
            <person name="Dai R."/>
            <person name="Chen F."/>
            <person name="Li S."/>
            <person name="Ye C."/>
            <person name="Du Z."/>
            <person name="Lin W."/>
            <person name="Wang J."/>
            <person name="Yu J."/>
            <person name="Yang H."/>
            <person name="Wang J."/>
            <person name="Huang P."/>
            <person name="Yang R."/>
        </authorList>
    </citation>
    <scope>NUCLEOTIDE SEQUENCE [LARGE SCALE GENOMIC DNA]</scope>
    <source>
        <strain>91001 / Biovar Mediaevalis</strain>
    </source>
</reference>
<evidence type="ECO:0000255" key="1">
    <source>
        <dbReference type="HAMAP-Rule" id="MF_00480"/>
    </source>
</evidence>
<evidence type="ECO:0000305" key="2"/>
<keyword id="KW-1185">Reference proteome</keyword>
<keyword id="KW-0687">Ribonucleoprotein</keyword>
<keyword id="KW-0689">Ribosomal protein</keyword>
<keyword id="KW-0694">RNA-binding</keyword>
<keyword id="KW-0699">rRNA-binding</keyword>
<keyword id="KW-0820">tRNA-binding</keyword>
<gene>
    <name evidence="1" type="primary">rpsG</name>
    <name type="ordered locus">YPO0201</name>
    <name type="ordered locus">y3984</name>
    <name type="ordered locus">YP_0200</name>
</gene>
<dbReference type="EMBL" id="AL590842">
    <property type="protein sequence ID" value="CAL18885.1"/>
    <property type="molecule type" value="Genomic_DNA"/>
</dbReference>
<dbReference type="EMBL" id="AE009952">
    <property type="protein sequence ID" value="AAM87528.1"/>
    <property type="molecule type" value="Genomic_DNA"/>
</dbReference>
<dbReference type="EMBL" id="AE017042">
    <property type="protein sequence ID" value="AAS60476.1"/>
    <property type="molecule type" value="Genomic_DNA"/>
</dbReference>
<dbReference type="PIR" id="AC0025">
    <property type="entry name" value="AC0025"/>
</dbReference>
<dbReference type="RefSeq" id="WP_002212324.1">
    <property type="nucleotide sequence ID" value="NZ_WUCM01000004.1"/>
</dbReference>
<dbReference type="RefSeq" id="YP_002345283.1">
    <property type="nucleotide sequence ID" value="NC_003143.1"/>
</dbReference>
<dbReference type="SMR" id="Q8ZJB4"/>
<dbReference type="STRING" id="214092.YPO0201"/>
<dbReference type="PaxDb" id="214092-YPO0201"/>
<dbReference type="DNASU" id="1148931"/>
<dbReference type="EnsemblBacteria" id="AAS60476">
    <property type="protein sequence ID" value="AAS60476"/>
    <property type="gene ID" value="YP_0200"/>
</dbReference>
<dbReference type="GeneID" id="97454225"/>
<dbReference type="KEGG" id="ype:YPO0201"/>
<dbReference type="KEGG" id="ypk:y3984"/>
<dbReference type="KEGG" id="ypm:YP_0200"/>
<dbReference type="PATRIC" id="fig|214092.21.peg.433"/>
<dbReference type="eggNOG" id="COG0049">
    <property type="taxonomic scope" value="Bacteria"/>
</dbReference>
<dbReference type="HOGENOM" id="CLU_072226_1_1_6"/>
<dbReference type="OMA" id="DDTHRMA"/>
<dbReference type="OrthoDB" id="9807653at2"/>
<dbReference type="Proteomes" id="UP000000815">
    <property type="component" value="Chromosome"/>
</dbReference>
<dbReference type="Proteomes" id="UP000001019">
    <property type="component" value="Chromosome"/>
</dbReference>
<dbReference type="Proteomes" id="UP000002490">
    <property type="component" value="Chromosome"/>
</dbReference>
<dbReference type="GO" id="GO:0022627">
    <property type="term" value="C:cytosolic small ribosomal subunit"/>
    <property type="evidence" value="ECO:0000318"/>
    <property type="project" value="GO_Central"/>
</dbReference>
<dbReference type="GO" id="GO:0005840">
    <property type="term" value="C:ribosome"/>
    <property type="evidence" value="ECO:0000318"/>
    <property type="project" value="GO_Central"/>
</dbReference>
<dbReference type="GO" id="GO:0003729">
    <property type="term" value="F:mRNA binding"/>
    <property type="evidence" value="ECO:0000318"/>
    <property type="project" value="GO_Central"/>
</dbReference>
<dbReference type="GO" id="GO:0019843">
    <property type="term" value="F:rRNA binding"/>
    <property type="evidence" value="ECO:0000318"/>
    <property type="project" value="GO_Central"/>
</dbReference>
<dbReference type="GO" id="GO:0003735">
    <property type="term" value="F:structural constituent of ribosome"/>
    <property type="evidence" value="ECO:0000318"/>
    <property type="project" value="GO_Central"/>
</dbReference>
<dbReference type="GO" id="GO:0000049">
    <property type="term" value="F:tRNA binding"/>
    <property type="evidence" value="ECO:0007669"/>
    <property type="project" value="UniProtKB-UniRule"/>
</dbReference>
<dbReference type="GO" id="GO:0000028">
    <property type="term" value="P:ribosomal small subunit assembly"/>
    <property type="evidence" value="ECO:0000318"/>
    <property type="project" value="GO_Central"/>
</dbReference>
<dbReference type="GO" id="GO:0006412">
    <property type="term" value="P:translation"/>
    <property type="evidence" value="ECO:0000318"/>
    <property type="project" value="GO_Central"/>
</dbReference>
<dbReference type="CDD" id="cd14869">
    <property type="entry name" value="uS7_Bacteria"/>
    <property type="match status" value="1"/>
</dbReference>
<dbReference type="FunFam" id="1.10.455.10:FF:000001">
    <property type="entry name" value="30S ribosomal protein S7"/>
    <property type="match status" value="1"/>
</dbReference>
<dbReference type="Gene3D" id="1.10.455.10">
    <property type="entry name" value="Ribosomal protein S7 domain"/>
    <property type="match status" value="1"/>
</dbReference>
<dbReference type="HAMAP" id="MF_00480_B">
    <property type="entry name" value="Ribosomal_uS7_B"/>
    <property type="match status" value="1"/>
</dbReference>
<dbReference type="InterPro" id="IPR000235">
    <property type="entry name" value="Ribosomal_uS7"/>
</dbReference>
<dbReference type="InterPro" id="IPR005717">
    <property type="entry name" value="Ribosomal_uS7_bac/org-type"/>
</dbReference>
<dbReference type="InterPro" id="IPR020606">
    <property type="entry name" value="Ribosomal_uS7_CS"/>
</dbReference>
<dbReference type="InterPro" id="IPR023798">
    <property type="entry name" value="Ribosomal_uS7_dom"/>
</dbReference>
<dbReference type="InterPro" id="IPR036823">
    <property type="entry name" value="Ribosomal_uS7_dom_sf"/>
</dbReference>
<dbReference type="NCBIfam" id="TIGR01029">
    <property type="entry name" value="rpsG_bact"/>
    <property type="match status" value="1"/>
</dbReference>
<dbReference type="PANTHER" id="PTHR11205">
    <property type="entry name" value="RIBOSOMAL PROTEIN S7"/>
    <property type="match status" value="1"/>
</dbReference>
<dbReference type="Pfam" id="PF00177">
    <property type="entry name" value="Ribosomal_S7"/>
    <property type="match status" value="1"/>
</dbReference>
<dbReference type="PIRSF" id="PIRSF002122">
    <property type="entry name" value="RPS7p_RPS7a_RPS5e_RPS7o"/>
    <property type="match status" value="1"/>
</dbReference>
<dbReference type="SUPFAM" id="SSF47973">
    <property type="entry name" value="Ribosomal protein S7"/>
    <property type="match status" value="1"/>
</dbReference>
<dbReference type="PROSITE" id="PS00052">
    <property type="entry name" value="RIBOSOMAL_S7"/>
    <property type="match status" value="1"/>
</dbReference>